<reference key="1">
    <citation type="submission" date="2005-10" db="EMBL/GenBank/DDBJ databases">
        <title>Complete sequence of Pelobacter carbinolicus DSM 2380.</title>
        <authorList>
            <person name="Copeland A."/>
            <person name="Lucas S."/>
            <person name="Lapidus A."/>
            <person name="Barry K."/>
            <person name="Detter J.C."/>
            <person name="Glavina T."/>
            <person name="Hammon N."/>
            <person name="Israni S."/>
            <person name="Pitluck S."/>
            <person name="Chertkov O."/>
            <person name="Schmutz J."/>
            <person name="Larimer F."/>
            <person name="Land M."/>
            <person name="Kyrpides N."/>
            <person name="Ivanova N."/>
            <person name="Richardson P."/>
        </authorList>
    </citation>
    <scope>NUCLEOTIDE SEQUENCE [LARGE SCALE GENOMIC DNA]</scope>
    <source>
        <strain>DSM 2380 / NBRC 103641 / GraBd1</strain>
    </source>
</reference>
<feature type="chain" id="PRO_0000229662" description="NAD kinase">
    <location>
        <begin position="1"/>
        <end position="285"/>
    </location>
</feature>
<feature type="active site" description="Proton acceptor" evidence="1">
    <location>
        <position position="68"/>
    </location>
</feature>
<feature type="binding site" evidence="1">
    <location>
        <begin position="68"/>
        <end position="69"/>
    </location>
    <ligand>
        <name>NAD(+)</name>
        <dbReference type="ChEBI" id="CHEBI:57540"/>
    </ligand>
</feature>
<feature type="binding site" evidence="1">
    <location>
        <begin position="142"/>
        <end position="143"/>
    </location>
    <ligand>
        <name>NAD(+)</name>
        <dbReference type="ChEBI" id="CHEBI:57540"/>
    </ligand>
</feature>
<feature type="binding site" evidence="1">
    <location>
        <position position="153"/>
    </location>
    <ligand>
        <name>NAD(+)</name>
        <dbReference type="ChEBI" id="CHEBI:57540"/>
    </ligand>
</feature>
<feature type="binding site" evidence="1">
    <location>
        <position position="170"/>
    </location>
    <ligand>
        <name>NAD(+)</name>
        <dbReference type="ChEBI" id="CHEBI:57540"/>
    </ligand>
</feature>
<feature type="binding site" evidence="1">
    <location>
        <position position="172"/>
    </location>
    <ligand>
        <name>NAD(+)</name>
        <dbReference type="ChEBI" id="CHEBI:57540"/>
    </ligand>
</feature>
<feature type="binding site" evidence="1">
    <location>
        <begin position="183"/>
        <end position="188"/>
    </location>
    <ligand>
        <name>NAD(+)</name>
        <dbReference type="ChEBI" id="CHEBI:57540"/>
    </ligand>
</feature>
<feature type="binding site" evidence="1">
    <location>
        <position position="242"/>
    </location>
    <ligand>
        <name>NAD(+)</name>
        <dbReference type="ChEBI" id="CHEBI:57540"/>
    </ligand>
</feature>
<sequence length="285" mass="30970">MKRIGIYAKCNHPDAVMVARDVVGWLRGRGLEVFLEKKLAQDVGDAEQSHDRGSIPGMVDLIIVLGGDGTLISVARQVCGRDVPILGVNLGSLGFLTEITRGELYLSLEKVLKGEFSLSDRMMLEAVVWRHGLEAGRFSVLNDVVINKGAIARIIDMEVSVDTAYLTTFKSDGLIIATPTGSTAYNLSAGGPIISPGLHCLVVTPICPHMLANRPLIVSDTACIRIEMKLRDQDVVLTADGQVGMALEAGDVVEIRKADRCTRLIKSPSKEYFEVLRTKLGWGER</sequence>
<organism>
    <name type="scientific">Syntrophotalea carbinolica (strain DSM 2380 / NBRC 103641 / GraBd1)</name>
    <name type="common">Pelobacter carbinolicus</name>
    <dbReference type="NCBI Taxonomy" id="338963"/>
    <lineage>
        <taxon>Bacteria</taxon>
        <taxon>Pseudomonadati</taxon>
        <taxon>Thermodesulfobacteriota</taxon>
        <taxon>Desulfuromonadia</taxon>
        <taxon>Desulfuromonadales</taxon>
        <taxon>Syntrophotaleaceae</taxon>
        <taxon>Syntrophotalea</taxon>
    </lineage>
</organism>
<keyword id="KW-0067">ATP-binding</keyword>
<keyword id="KW-0963">Cytoplasm</keyword>
<keyword id="KW-0418">Kinase</keyword>
<keyword id="KW-0520">NAD</keyword>
<keyword id="KW-0521">NADP</keyword>
<keyword id="KW-0547">Nucleotide-binding</keyword>
<keyword id="KW-1185">Reference proteome</keyword>
<keyword id="KW-0808">Transferase</keyword>
<dbReference type="EC" id="2.7.1.23" evidence="1"/>
<dbReference type="EMBL" id="CP000142">
    <property type="protein sequence ID" value="ABA89566.1"/>
    <property type="molecule type" value="Genomic_DNA"/>
</dbReference>
<dbReference type="RefSeq" id="WP_011342088.1">
    <property type="nucleotide sequence ID" value="NC_007498.2"/>
</dbReference>
<dbReference type="SMR" id="Q3A241"/>
<dbReference type="STRING" id="338963.Pcar_2327"/>
<dbReference type="KEGG" id="pca:Pcar_2327"/>
<dbReference type="eggNOG" id="COG0061">
    <property type="taxonomic scope" value="Bacteria"/>
</dbReference>
<dbReference type="HOGENOM" id="CLU_008831_0_1_7"/>
<dbReference type="OrthoDB" id="9774737at2"/>
<dbReference type="Proteomes" id="UP000002534">
    <property type="component" value="Chromosome"/>
</dbReference>
<dbReference type="GO" id="GO:0005737">
    <property type="term" value="C:cytoplasm"/>
    <property type="evidence" value="ECO:0007669"/>
    <property type="project" value="UniProtKB-SubCell"/>
</dbReference>
<dbReference type="GO" id="GO:0005524">
    <property type="term" value="F:ATP binding"/>
    <property type="evidence" value="ECO:0007669"/>
    <property type="project" value="UniProtKB-KW"/>
</dbReference>
<dbReference type="GO" id="GO:0046872">
    <property type="term" value="F:metal ion binding"/>
    <property type="evidence" value="ECO:0007669"/>
    <property type="project" value="UniProtKB-UniRule"/>
</dbReference>
<dbReference type="GO" id="GO:0051287">
    <property type="term" value="F:NAD binding"/>
    <property type="evidence" value="ECO:0007669"/>
    <property type="project" value="UniProtKB-ARBA"/>
</dbReference>
<dbReference type="GO" id="GO:0003951">
    <property type="term" value="F:NAD+ kinase activity"/>
    <property type="evidence" value="ECO:0007669"/>
    <property type="project" value="UniProtKB-UniRule"/>
</dbReference>
<dbReference type="GO" id="GO:0019674">
    <property type="term" value="P:NAD metabolic process"/>
    <property type="evidence" value="ECO:0007669"/>
    <property type="project" value="InterPro"/>
</dbReference>
<dbReference type="GO" id="GO:0006741">
    <property type="term" value="P:NADP biosynthetic process"/>
    <property type="evidence" value="ECO:0007669"/>
    <property type="project" value="UniProtKB-UniRule"/>
</dbReference>
<dbReference type="FunFam" id="2.60.200.30:FF:000009">
    <property type="entry name" value="Poly(P)/ATP NAD kinase"/>
    <property type="match status" value="1"/>
</dbReference>
<dbReference type="Gene3D" id="3.40.50.10330">
    <property type="entry name" value="Probable inorganic polyphosphate/atp-NAD kinase, domain 1"/>
    <property type="match status" value="1"/>
</dbReference>
<dbReference type="Gene3D" id="2.60.200.30">
    <property type="entry name" value="Probable inorganic polyphosphate/atp-NAD kinase, domain 2"/>
    <property type="match status" value="1"/>
</dbReference>
<dbReference type="HAMAP" id="MF_00361">
    <property type="entry name" value="NAD_kinase"/>
    <property type="match status" value="1"/>
</dbReference>
<dbReference type="InterPro" id="IPR017438">
    <property type="entry name" value="ATP-NAD_kinase_N"/>
</dbReference>
<dbReference type="InterPro" id="IPR017437">
    <property type="entry name" value="ATP-NAD_kinase_PpnK-typ_C"/>
</dbReference>
<dbReference type="InterPro" id="IPR016064">
    <property type="entry name" value="NAD/diacylglycerol_kinase_sf"/>
</dbReference>
<dbReference type="InterPro" id="IPR002504">
    <property type="entry name" value="NADK"/>
</dbReference>
<dbReference type="PANTHER" id="PTHR20275">
    <property type="entry name" value="NAD KINASE"/>
    <property type="match status" value="1"/>
</dbReference>
<dbReference type="PANTHER" id="PTHR20275:SF0">
    <property type="entry name" value="NAD KINASE"/>
    <property type="match status" value="1"/>
</dbReference>
<dbReference type="Pfam" id="PF01513">
    <property type="entry name" value="NAD_kinase"/>
    <property type="match status" value="1"/>
</dbReference>
<dbReference type="Pfam" id="PF20143">
    <property type="entry name" value="NAD_kinase_C"/>
    <property type="match status" value="1"/>
</dbReference>
<dbReference type="SUPFAM" id="SSF111331">
    <property type="entry name" value="NAD kinase/diacylglycerol kinase-like"/>
    <property type="match status" value="1"/>
</dbReference>
<accession>Q3A241</accession>
<name>NADK_SYNC1</name>
<gene>
    <name evidence="1" type="primary">nadK</name>
    <name type="ordered locus">Pcar_2327</name>
</gene>
<comment type="function">
    <text evidence="1">Involved in the regulation of the intracellular balance of NAD and NADP, and is a key enzyme in the biosynthesis of NADP. Catalyzes specifically the phosphorylation on 2'-hydroxyl of the adenosine moiety of NAD to yield NADP.</text>
</comment>
<comment type="catalytic activity">
    <reaction evidence="1">
        <text>NAD(+) + ATP = ADP + NADP(+) + H(+)</text>
        <dbReference type="Rhea" id="RHEA:18629"/>
        <dbReference type="ChEBI" id="CHEBI:15378"/>
        <dbReference type="ChEBI" id="CHEBI:30616"/>
        <dbReference type="ChEBI" id="CHEBI:57540"/>
        <dbReference type="ChEBI" id="CHEBI:58349"/>
        <dbReference type="ChEBI" id="CHEBI:456216"/>
        <dbReference type="EC" id="2.7.1.23"/>
    </reaction>
</comment>
<comment type="cofactor">
    <cofactor evidence="1">
        <name>a divalent metal cation</name>
        <dbReference type="ChEBI" id="CHEBI:60240"/>
    </cofactor>
</comment>
<comment type="subcellular location">
    <subcellularLocation>
        <location evidence="1">Cytoplasm</location>
    </subcellularLocation>
</comment>
<comment type="similarity">
    <text evidence="1">Belongs to the NAD kinase family.</text>
</comment>
<proteinExistence type="inferred from homology"/>
<protein>
    <recommendedName>
        <fullName evidence="1">NAD kinase</fullName>
        <ecNumber evidence="1">2.7.1.23</ecNumber>
    </recommendedName>
    <alternativeName>
        <fullName evidence="1">ATP-dependent NAD kinase</fullName>
    </alternativeName>
</protein>
<evidence type="ECO:0000255" key="1">
    <source>
        <dbReference type="HAMAP-Rule" id="MF_00361"/>
    </source>
</evidence>